<comment type="subcellular location">
    <subcellularLocation>
        <location evidence="1">Nucleus</location>
    </subcellularLocation>
</comment>
<comment type="tissue specificity">
    <text evidence="3">Expressed in leaves, leaf primordia, immature ears, immature tassels, whole ovules, silk and husk leaves.</text>
</comment>
<comment type="miscellaneous">
    <text>Might be partially redundant with the LBD6/AS2/IG1 gene.</text>
</comment>
<comment type="similarity">
    <text evidence="4">Belongs to the LOB domain-containing protein family.</text>
</comment>
<name>IAL1_MAIZE</name>
<sequence>MASSVRAPSGSVIAVASSSSSAALAGVCGTGSPCAACKFLRRKCQPDCVFAPYFPPDNPQKFVRVHRVFGASNVTKLMNEIHPLQREDAMNSLAYEADMRIRDPVYGCVGVISILQHNLRQLQQDLARAKYELSKYQAAAAASASTAPTGPQAMAEFIGSAMPNGAAHNFINLGHSAALGSLGGSTAMFGQQEQFGSNAQMLSRSYDGGEPIARIGMNNGGYEFGYSSATTMGGSAGAVSGGLGTLGISSPPFLKSGTAGGDEKPSGGY</sequence>
<organism>
    <name type="scientific">Zea mays</name>
    <name type="common">Maize</name>
    <dbReference type="NCBI Taxonomy" id="4577"/>
    <lineage>
        <taxon>Eukaryota</taxon>
        <taxon>Viridiplantae</taxon>
        <taxon>Streptophyta</taxon>
        <taxon>Embryophyta</taxon>
        <taxon>Tracheophyta</taxon>
        <taxon>Spermatophyta</taxon>
        <taxon>Magnoliopsida</taxon>
        <taxon>Liliopsida</taxon>
        <taxon>Poales</taxon>
        <taxon>Poaceae</taxon>
        <taxon>PACMAD clade</taxon>
        <taxon>Panicoideae</taxon>
        <taxon>Andropogonodae</taxon>
        <taxon>Andropogoneae</taxon>
        <taxon>Tripsacinae</taxon>
        <taxon>Zea</taxon>
    </lineage>
</organism>
<accession>A1YKY7</accession>
<feature type="chain" id="PRO_0000299141" description="Protein IAL1">
    <location>
        <begin position="1"/>
        <end position="269"/>
    </location>
</feature>
<feature type="domain" description="LOB" evidence="2">
    <location>
        <begin position="32"/>
        <end position="133"/>
    </location>
</feature>
<keyword id="KW-0217">Developmental protein</keyword>
<keyword id="KW-0539">Nucleus</keyword>
<keyword id="KW-1185">Reference proteome</keyword>
<dbReference type="EMBL" id="EF081455">
    <property type="protein sequence ID" value="ABM21684.1"/>
    <property type="molecule type" value="mRNA"/>
</dbReference>
<dbReference type="RefSeq" id="NP_001105986.2">
    <property type="nucleotide sequence ID" value="NM_001112516.2"/>
</dbReference>
<dbReference type="SMR" id="A1YKY7"/>
<dbReference type="FunCoup" id="A1YKY7">
    <property type="interactions" value="2"/>
</dbReference>
<dbReference type="STRING" id="4577.A1YKY7"/>
<dbReference type="PaxDb" id="4577-GRMZM2G133806_P01"/>
<dbReference type="GeneID" id="100037816"/>
<dbReference type="KEGG" id="zma:100037816"/>
<dbReference type="eggNOG" id="ENOG502QV43">
    <property type="taxonomic scope" value="Eukaryota"/>
</dbReference>
<dbReference type="InParanoid" id="A1YKY7"/>
<dbReference type="OrthoDB" id="2016447at2759"/>
<dbReference type="Proteomes" id="UP000007305">
    <property type="component" value="Unplaced"/>
</dbReference>
<dbReference type="ExpressionAtlas" id="A1YKY7">
    <property type="expression patterns" value="baseline and differential"/>
</dbReference>
<dbReference type="GO" id="GO:0005634">
    <property type="term" value="C:nucleus"/>
    <property type="evidence" value="ECO:0007669"/>
    <property type="project" value="UniProtKB-SubCell"/>
</dbReference>
<dbReference type="InterPro" id="IPR004883">
    <property type="entry name" value="LOB"/>
</dbReference>
<dbReference type="PANTHER" id="PTHR31301">
    <property type="entry name" value="LOB DOMAIN-CONTAINING PROTEIN 4-RELATED"/>
    <property type="match status" value="1"/>
</dbReference>
<dbReference type="PANTHER" id="PTHR31301:SF83">
    <property type="entry name" value="PROTEIN ASYMMETRIC LEAVES 2"/>
    <property type="match status" value="1"/>
</dbReference>
<dbReference type="Pfam" id="PF03195">
    <property type="entry name" value="LOB"/>
    <property type="match status" value="1"/>
</dbReference>
<dbReference type="PROSITE" id="PS50891">
    <property type="entry name" value="LOB"/>
    <property type="match status" value="1"/>
</dbReference>
<proteinExistence type="evidence at transcript level"/>
<protein>
    <recommendedName>
        <fullName>Protein IAL1</fullName>
    </recommendedName>
    <alternativeName>
        <fullName>IG1/AS2-like protein 1</fullName>
    </alternativeName>
</protein>
<evidence type="ECO:0000250" key="1"/>
<evidence type="ECO:0000255" key="2">
    <source>
        <dbReference type="PROSITE-ProRule" id="PRU00291"/>
    </source>
</evidence>
<evidence type="ECO:0000269" key="3">
    <source>
    </source>
</evidence>
<evidence type="ECO:0000305" key="4"/>
<reference key="1">
    <citation type="journal article" date="2007" name="Plant Cell">
        <title>The indeterminate gametophyte1 gene of maize encodes a LOB domain protein required for embryo Sac and leaf development.</title>
        <authorList>
            <person name="Evans M.M.S."/>
        </authorList>
    </citation>
    <scope>NUCLEOTIDE SEQUENCE [MRNA]</scope>
    <scope>TISSUE SPECIFICITY</scope>
    <source>
        <strain>cv. B73</strain>
    </source>
</reference>